<comment type="function">
    <text evidence="2">Accessory subunit of the mitochondrial membrane respiratory chain NADH dehydrogenase (Complex I), that is believed not to be involved in catalysis. Complex I functions in the transfer of electrons from NADH to the respiratory chain. The immediate electron acceptor for the enzyme is believed to be ubiquinone.</text>
</comment>
<comment type="cofactor">
    <cofactor evidence="1">
        <name>FAD</name>
        <dbReference type="ChEBI" id="CHEBI:57692"/>
    </cofactor>
    <text evidence="1">Binds 1 FAD per subunit.</text>
</comment>
<comment type="subunit">
    <text evidence="2">Complex I is composed of 45 different subunits. This a component of the hydrophobic protein fraction.</text>
</comment>
<comment type="subcellular location">
    <subcellularLocation>
        <location evidence="2">Mitochondrion matrix</location>
    </subcellularLocation>
</comment>
<comment type="PTM">
    <text evidence="4">Phosphorylation at Ser-250 by PINK1 is required for the binding and/or reduction of the complex I substrate ubiquinone.</text>
</comment>
<comment type="similarity">
    <text evidence="5">Belongs to the complex I NDUFA10 subunit family.</text>
</comment>
<keyword id="KW-0249">Electron transport</keyword>
<keyword id="KW-0274">FAD</keyword>
<keyword id="KW-0285">Flavoprotein</keyword>
<keyword id="KW-0496">Mitochondrion</keyword>
<keyword id="KW-0597">Phosphoprotein</keyword>
<keyword id="KW-1185">Reference proteome</keyword>
<keyword id="KW-0679">Respiratory chain</keyword>
<keyword id="KW-0809">Transit peptide</keyword>
<keyword id="KW-0813">Transport</keyword>
<dbReference type="EMBL" id="DQ885717">
    <property type="protein sequence ID" value="ABH12226.1"/>
    <property type="molecule type" value="mRNA"/>
</dbReference>
<dbReference type="RefSeq" id="NP_001065273.1">
    <property type="nucleotide sequence ID" value="NM_001071805.1"/>
</dbReference>
<dbReference type="SMR" id="Q0MQB7"/>
<dbReference type="FunCoup" id="Q0MQB7">
    <property type="interactions" value="1804"/>
</dbReference>
<dbReference type="STRING" id="9598.ENSPTRP00000077283"/>
<dbReference type="PaxDb" id="9598-ENSPTRP00000022417"/>
<dbReference type="GeneID" id="470696"/>
<dbReference type="KEGG" id="ptr:470696"/>
<dbReference type="CTD" id="4705"/>
<dbReference type="eggNOG" id="KOG3877">
    <property type="taxonomic scope" value="Eukaryota"/>
</dbReference>
<dbReference type="HOGENOM" id="CLU_050591_0_0_1"/>
<dbReference type="InParanoid" id="Q0MQB7"/>
<dbReference type="OrthoDB" id="14821at9604"/>
<dbReference type="TreeFam" id="TF314616"/>
<dbReference type="Proteomes" id="UP000002277">
    <property type="component" value="Unplaced"/>
</dbReference>
<dbReference type="GO" id="GO:0005737">
    <property type="term" value="C:cytoplasm"/>
    <property type="evidence" value="ECO:0000318"/>
    <property type="project" value="GO_Central"/>
</dbReference>
<dbReference type="GO" id="GO:0005759">
    <property type="term" value="C:mitochondrial matrix"/>
    <property type="evidence" value="ECO:0007669"/>
    <property type="project" value="UniProtKB-SubCell"/>
</dbReference>
<dbReference type="GO" id="GO:0045271">
    <property type="term" value="C:respiratory chain complex I"/>
    <property type="evidence" value="ECO:0000250"/>
    <property type="project" value="UniProtKB"/>
</dbReference>
<dbReference type="GO" id="GO:0006120">
    <property type="term" value="P:mitochondrial electron transport, NADH to ubiquinone"/>
    <property type="evidence" value="ECO:0000318"/>
    <property type="project" value="GO_Central"/>
</dbReference>
<dbReference type="CDD" id="cd02030">
    <property type="entry name" value="NDUO42"/>
    <property type="match status" value="1"/>
</dbReference>
<dbReference type="FunFam" id="3.40.50.300:FF:000837">
    <property type="entry name" value="NADH dehydrogenase [ubiquinone] 1 alpha subcomplex subunit 10, mitochondrial"/>
    <property type="match status" value="1"/>
</dbReference>
<dbReference type="Gene3D" id="3.40.50.300">
    <property type="entry name" value="P-loop containing nucleotide triphosphate hydrolases"/>
    <property type="match status" value="1"/>
</dbReference>
<dbReference type="InterPro" id="IPR050566">
    <property type="entry name" value="Deoxyribonucleoside_kinase"/>
</dbReference>
<dbReference type="InterPro" id="IPR031314">
    <property type="entry name" value="DNK_dom"/>
</dbReference>
<dbReference type="InterPro" id="IPR015828">
    <property type="entry name" value="NDUFA10"/>
</dbReference>
<dbReference type="InterPro" id="IPR027417">
    <property type="entry name" value="P-loop_NTPase"/>
</dbReference>
<dbReference type="PANTHER" id="PTHR10513">
    <property type="entry name" value="DEOXYNUCLEOSIDE KINASE"/>
    <property type="match status" value="1"/>
</dbReference>
<dbReference type="PANTHER" id="PTHR10513:SF15">
    <property type="entry name" value="NADH DEHYDROGENASE [UBIQUINONE] 1 ALPHA SUBCOMPLEX SUBUNIT 10, MITOCHONDRIAL"/>
    <property type="match status" value="1"/>
</dbReference>
<dbReference type="Pfam" id="PF01712">
    <property type="entry name" value="dNK"/>
    <property type="match status" value="1"/>
</dbReference>
<dbReference type="PIRSF" id="PIRSF000543">
    <property type="entry name" value="NADH_UQ_42KD"/>
    <property type="match status" value="1"/>
</dbReference>
<dbReference type="SUPFAM" id="SSF52540">
    <property type="entry name" value="P-loop containing nucleoside triphosphate hydrolases"/>
    <property type="match status" value="1"/>
</dbReference>
<evidence type="ECO:0000250" key="1"/>
<evidence type="ECO:0000250" key="2">
    <source>
        <dbReference type="UniProtKB" id="O95299"/>
    </source>
</evidence>
<evidence type="ECO:0000250" key="3">
    <source>
        <dbReference type="UniProtKB" id="P34942"/>
    </source>
</evidence>
<evidence type="ECO:0000250" key="4">
    <source>
        <dbReference type="UniProtKB" id="Q99LC3"/>
    </source>
</evidence>
<evidence type="ECO:0000305" key="5"/>
<gene>
    <name type="primary">NDUFA10</name>
</gene>
<feature type="transit peptide" description="Mitochondrion" evidence="3">
    <location>
        <begin position="1"/>
        <end position="35"/>
    </location>
</feature>
<feature type="chain" id="PRO_0000251813" description="NADH dehydrogenase [ubiquinone] 1 alpha subcomplex subunit 10, mitochondrial">
    <location>
        <begin position="36"/>
        <end position="355"/>
    </location>
</feature>
<feature type="modified residue" description="Phosphoserine; by PINK1" evidence="4">
    <location>
        <position position="250"/>
    </location>
</feature>
<feature type="modified residue" description="N6-succinyllysine" evidence="4">
    <location>
        <position position="285"/>
    </location>
</feature>
<protein>
    <recommendedName>
        <fullName>NADH dehydrogenase [ubiquinone] 1 alpha subcomplex subunit 10, mitochondrial</fullName>
    </recommendedName>
    <alternativeName>
        <fullName>Complex I-42kD</fullName>
        <shortName>CI-42kD</shortName>
    </alternativeName>
    <alternativeName>
        <fullName>NADH-ubiquinone oxidoreductase 42 kDa subunit</fullName>
    </alternativeName>
</protein>
<proteinExistence type="evidence at transcript level"/>
<sequence>MALRLLKLAATSASARVVAAGAQRVRGVHSSVQCKLRYGMWHFLLGDKASKRLTERSRVITVDGNICTGKGKLAKEIAEKLGFKHFPEAGIHYPDSTTGDGKPLAADYNGNCSLEKFYDDPRSNDGNSYRLQSWLYSSRLLQYSDALEHLLTTGQGVVLERSIFSDFVFLEAMYNQGFIRKQCVDHYNEVKSVTICDYLPPHLVIYIDVPVPEVQRRIQKKGDPHEMKITSAYLQDIENAYKKTFLPEMSEKCEVLQYSAREAQDSKKAVEDIEYLKFDKGPWLKQDNRTLYHLRLLVQDKFEVLNYTSIPIFLPEVTIGAHQTDRVLHQFRELPGRKYSPGYNTEVGDKWIWLK</sequence>
<organism>
    <name type="scientific">Pan troglodytes</name>
    <name type="common">Chimpanzee</name>
    <dbReference type="NCBI Taxonomy" id="9598"/>
    <lineage>
        <taxon>Eukaryota</taxon>
        <taxon>Metazoa</taxon>
        <taxon>Chordata</taxon>
        <taxon>Craniata</taxon>
        <taxon>Vertebrata</taxon>
        <taxon>Euteleostomi</taxon>
        <taxon>Mammalia</taxon>
        <taxon>Eutheria</taxon>
        <taxon>Euarchontoglires</taxon>
        <taxon>Primates</taxon>
        <taxon>Haplorrhini</taxon>
        <taxon>Catarrhini</taxon>
        <taxon>Hominidae</taxon>
        <taxon>Pan</taxon>
    </lineage>
</organism>
<reference key="1">
    <citation type="journal article" date="2006" name="Gene">
        <title>Adaptive selection of mitochondrial complex I subunits during primate radiation.</title>
        <authorList>
            <person name="Mishmar D."/>
            <person name="Ruiz-Pesini E."/>
            <person name="Mondragon-Palomino M."/>
            <person name="Procaccio V."/>
            <person name="Gaut B."/>
            <person name="Wallace D.C."/>
        </authorList>
    </citation>
    <scope>NUCLEOTIDE SEQUENCE [MRNA]</scope>
</reference>
<name>NDUAA_PANTR</name>
<accession>Q0MQB7</accession>